<sequence>MTLREKYGEWGIILGATEGVGKAFCERLAKEGMNVVMVGRREEKLKELGEELKNTYEIDYKVVKADFSLPDATDKIFAATENLDMGFMAYVACLHSFGKIQDTPWEKHEAMINVNVVTFMKCFYHYMKIFAAQDRGAVINVSSMTGISSSPWNGQYGAGKAFILKMTEAVACETEKTNVDVEVITLGTTLTPSLLSNLPGGPQGEAVMKTAQTPEEVVDEAFEKLGKELSVISGERNKASVHDWKANHTEDDYIRYMGSFYQE</sequence>
<dbReference type="EC" id="1.1.1.201" evidence="3"/>
<dbReference type="EMBL" id="KF052988">
    <property type="protein sequence ID" value="AGN52919.1"/>
    <property type="molecule type" value="Genomic_DNA"/>
</dbReference>
<dbReference type="RefSeq" id="WP_004843516.1">
    <property type="nucleotide sequence ID" value="NZ_QSPZ01000009.1"/>
</dbReference>
<dbReference type="SMR" id="R9UAM1"/>
<dbReference type="STRING" id="33038.GCA_900067245_02691"/>
<dbReference type="SwissLipids" id="SLP:000001345"/>
<dbReference type="GeneID" id="57433518"/>
<dbReference type="KEGG" id="ag:AGN52919"/>
<dbReference type="GO" id="GO:0047022">
    <property type="term" value="F:7-beta-hydroxysteroid dehydrogenase (NADP+) activity"/>
    <property type="evidence" value="ECO:0007669"/>
    <property type="project" value="UniProtKB-EC"/>
</dbReference>
<dbReference type="GO" id="GO:0000166">
    <property type="term" value="F:nucleotide binding"/>
    <property type="evidence" value="ECO:0007669"/>
    <property type="project" value="UniProtKB-KW"/>
</dbReference>
<dbReference type="GO" id="GO:0030573">
    <property type="term" value="P:bile acid catabolic process"/>
    <property type="evidence" value="ECO:0007669"/>
    <property type="project" value="UniProtKB-KW"/>
</dbReference>
<dbReference type="GO" id="GO:0016042">
    <property type="term" value="P:lipid catabolic process"/>
    <property type="evidence" value="ECO:0007669"/>
    <property type="project" value="UniProtKB-KW"/>
</dbReference>
<dbReference type="FunFam" id="3.40.50.720:FF:000990">
    <property type="entry name" value="SDR family oxidoreductase"/>
    <property type="match status" value="1"/>
</dbReference>
<dbReference type="Gene3D" id="3.40.50.720">
    <property type="entry name" value="NAD(P)-binding Rossmann-like Domain"/>
    <property type="match status" value="1"/>
</dbReference>
<dbReference type="InterPro" id="IPR036291">
    <property type="entry name" value="NAD(P)-bd_dom_sf"/>
</dbReference>
<dbReference type="InterPro" id="IPR002347">
    <property type="entry name" value="SDR_fam"/>
</dbReference>
<dbReference type="InterPro" id="IPR051019">
    <property type="entry name" value="VLCFA-Steroid_DH"/>
</dbReference>
<dbReference type="PANTHER" id="PTHR43899">
    <property type="entry name" value="RH59310P"/>
    <property type="match status" value="1"/>
</dbReference>
<dbReference type="PANTHER" id="PTHR43899:SF13">
    <property type="entry name" value="RH59310P"/>
    <property type="match status" value="1"/>
</dbReference>
<dbReference type="Pfam" id="PF00106">
    <property type="entry name" value="adh_short"/>
    <property type="match status" value="1"/>
</dbReference>
<dbReference type="PRINTS" id="PR00081">
    <property type="entry name" value="GDHRDH"/>
</dbReference>
<dbReference type="SUPFAM" id="SSF51735">
    <property type="entry name" value="NAD(P)-binding Rossmann-fold domains"/>
    <property type="match status" value="1"/>
</dbReference>
<keyword id="KW-0088">Bile acid catabolism</keyword>
<keyword id="KW-0903">Direct protein sequencing</keyword>
<keyword id="KW-0442">Lipid degradation</keyword>
<keyword id="KW-0443">Lipid metabolism</keyword>
<keyword id="KW-0521">NADP</keyword>
<keyword id="KW-0547">Nucleotide-binding</keyword>
<keyword id="KW-0560">Oxidoreductase</keyword>
<keyword id="KW-0753">Steroid metabolism</keyword>
<evidence type="ECO:0000250" key="1">
    <source>
        <dbReference type="UniProtKB" id="A4ECA9"/>
    </source>
</evidence>
<evidence type="ECO:0000250" key="2">
    <source>
        <dbReference type="UniProtKB" id="P0AET8"/>
    </source>
</evidence>
<evidence type="ECO:0000269" key="3">
    <source>
    </source>
</evidence>
<evidence type="ECO:0000303" key="4">
    <source>
    </source>
</evidence>
<evidence type="ECO:0000305" key="5"/>
<evidence type="ECO:0000312" key="6">
    <source>
        <dbReference type="EMBL" id="AGN52919.1"/>
    </source>
</evidence>
<comment type="function">
    <text evidence="3">7beta-hydroxysteroid dehydrogenase that catalyzes the reduction of the 7-oxo group of 7-oxo-lithocholate (7-oxo-LCA), to yield ursodeoxycholate (UDCA). As R.gnavus is a common core bacterium of the human gut microbiota, this enzyme contributes to the formation of UDCA in the human colon. UDCA is regarded as a chemopreventive beneficial secondary bile acid due to its low hydrophobicity; it protects hepatocytes and bile duct epithelial cells against necrosis and apoptosis induced by more hydrophobic secondary bile acids like deoxycholate (DCA). This enzyme is also able to catalyze the reverse reaction in vitro, i.e. the oxidation of the 7beta-hydroxy group of UDCA to 7-oxo-LCA, but much less efficiently than the reduction reaction, and this oxidation reaction is not observed in vivo. It is specific for NADPH/NADP(+) as the electron acceptor/donor since the activity observed with NADH/NAD(+) is less than 0.5% of that assayed using NADPH/NADP(+) in both directions.</text>
</comment>
<comment type="catalytic activity">
    <reaction evidence="3">
        <text>a 7beta-hydroxysteroid + NADP(+) = a 7-oxosteroid + NADPH + H(+)</text>
        <dbReference type="Rhea" id="RHEA:20233"/>
        <dbReference type="ChEBI" id="CHEBI:15378"/>
        <dbReference type="ChEBI" id="CHEBI:35349"/>
        <dbReference type="ChEBI" id="CHEBI:47789"/>
        <dbReference type="ChEBI" id="CHEBI:57783"/>
        <dbReference type="ChEBI" id="CHEBI:58349"/>
        <dbReference type="EC" id="1.1.1.201"/>
    </reaction>
    <physiologicalReaction direction="right-to-left" evidence="3">
        <dbReference type="Rhea" id="RHEA:20235"/>
    </physiologicalReaction>
</comment>
<comment type="catalytic activity">
    <reaction evidence="3">
        <text>7-oxolithocholate + NADPH + H(+) = ursodeoxycholate + NADP(+)</text>
        <dbReference type="Rhea" id="RHEA:47540"/>
        <dbReference type="ChEBI" id="CHEBI:15378"/>
        <dbReference type="ChEBI" id="CHEBI:57783"/>
        <dbReference type="ChEBI" id="CHEBI:58349"/>
        <dbReference type="ChEBI" id="CHEBI:78604"/>
        <dbReference type="ChEBI" id="CHEBI:78605"/>
    </reaction>
    <physiologicalReaction direction="left-to-right" evidence="3">
        <dbReference type="Rhea" id="RHEA:47541"/>
    </physiologicalReaction>
</comment>
<comment type="biophysicochemical properties">
    <kinetics>
        <KM evidence="3">38.8 uM for 7-oxolithocholate (7-oxo-LCA) (at pH 6 and 37 degrees Celsius)</KM>
        <KM evidence="3">974 uM for ursodeoxycholate (UDCA) (at pH 10 and 37 degrees Celsius)</KM>
        <Vmax evidence="3">23.8 umol/min/mg enzyme for the reduction of 7-oxolithocholate (7-oxo-LCA) (at pH 6 and 37 degrees Celsius)</Vmax>
        <Vmax evidence="3">11.1 umol/min/mg enzyme for the oxidation of ursodeoxycholate (UDCA) (at pH 10 and 37 degrees Celsius)</Vmax>
        <text evidence="3">kcat is 700 min(-1) for the reduction of 7-oxolithocholate (7-oxo-LCA) (at pH 6 and 37 degrees Celsius). kcat is 326 min(-1) for the oxidation of ursodeoxycholate (UDCA) (at pH 10 and 37 degrees Celsius).</text>
    </kinetics>
    <phDependence>
        <text evidence="3">Optimum pH is 6 and 10 for the reduction and oxidation reactions, respectively.</text>
    </phDependence>
    <temperatureDependence>
        <text evidence="3">Optimum temperature is 37 degrees Celsius for the reduction reaction. The enzyme appears mostly inactivated at 60 degrees Celsius.</text>
    </temperatureDependence>
</comment>
<comment type="similarity">
    <text evidence="5">Belongs to the short-chain dehydrogenases/reductases (SDR) family.</text>
</comment>
<accession>R9UAM1</accession>
<feature type="chain" id="PRO_0000450343" description="7beta-hydroxysteroid dehydrogenase">
    <location>
        <begin position="1"/>
        <end position="263"/>
    </location>
</feature>
<feature type="active site" description="Proton acceptor" evidence="1">
    <location>
        <position position="156"/>
    </location>
</feature>
<feature type="binding site" evidence="1">
    <location>
        <begin position="17"/>
        <end position="21"/>
    </location>
    <ligand>
        <name>NADP(+)</name>
        <dbReference type="ChEBI" id="CHEBI:58349"/>
    </ligand>
</feature>
<feature type="binding site" evidence="1">
    <location>
        <begin position="40"/>
        <end position="41"/>
    </location>
    <ligand>
        <name>NADP(+)</name>
        <dbReference type="ChEBI" id="CHEBI:58349"/>
    </ligand>
</feature>
<feature type="binding site" evidence="1">
    <location>
        <begin position="66"/>
        <end position="67"/>
    </location>
    <ligand>
        <name>NADP(+)</name>
        <dbReference type="ChEBI" id="CHEBI:58349"/>
    </ligand>
</feature>
<feature type="binding site" evidence="1">
    <location>
        <position position="240"/>
    </location>
    <ligand>
        <name>NADP(+)</name>
        <dbReference type="ChEBI" id="CHEBI:58349"/>
    </ligand>
</feature>
<feature type="site" description="Transition state stabilizer" evidence="1">
    <location>
        <position position="143"/>
    </location>
</feature>
<feature type="site" description="Lowers pKa of active site Tyr" evidence="2">
    <location>
        <position position="160"/>
    </location>
</feature>
<protein>
    <recommendedName>
        <fullName evidence="4">7beta-hydroxysteroid dehydrogenase</fullName>
        <shortName evidence="4">7beta-HSDH</shortName>
        <ecNumber evidence="3">1.1.1.201</ecNumber>
    </recommendedName>
    <alternativeName>
        <fullName evidence="4">NADP-dependent 7beta-hydroxysteroid dehydrogenase</fullName>
    </alternativeName>
</protein>
<proteinExistence type="evidence at protein level"/>
<reference key="1">
    <citation type="journal article" date="2013" name="J. Lipid Res.">
        <title>Contribution of the 7beta-hydroxysteroid dehydrogenase from Ruminococcus gnavus N53 to ursodeoxycholic acid formation in the human colon.</title>
        <authorList>
            <person name="Lee J.Y."/>
            <person name="Arai H."/>
            <person name="Nakamura Y."/>
            <person name="Fukiya S."/>
            <person name="Wada M."/>
            <person name="Yokota A."/>
        </authorList>
    </citation>
    <scope>NUCLEOTIDE SEQUENCE [GENOMIC DNA]</scope>
    <scope>PROTEIN SEQUENCE OF 1-20</scope>
    <scope>FUNCTION</scope>
    <scope>CATALYTIC ACTIVITY</scope>
    <scope>BIOPHYSICOCHEMICAL PROPERTIES</scope>
    <scope>SUBSTRATE SPECIFICITY</scope>
    <source>
        <strain>N53</strain>
    </source>
</reference>
<organism evidence="6">
    <name type="scientific">Mediterraneibacter gnavus</name>
    <name type="common">Ruminococcus gnavus</name>
    <dbReference type="NCBI Taxonomy" id="33038"/>
    <lineage>
        <taxon>Bacteria</taxon>
        <taxon>Bacillati</taxon>
        <taxon>Bacillota</taxon>
        <taxon>Clostridia</taxon>
        <taxon>Lachnospirales</taxon>
        <taxon>Lachnospiraceae</taxon>
        <taxon>Mediterraneibacter</taxon>
    </lineage>
</organism>
<name>HSDHB_MEDGN</name>